<proteinExistence type="inferred from homology"/>
<comment type="function">
    <text evidence="1">Component of the acetyl coenzyme A carboxylase (ACC) complex. First, biotin carboxylase catalyzes the carboxylation of biotin on its carrier protein (BCCP) and then the CO(2) group is transferred by the carboxyltransferase to acetyl-CoA to form malonyl-CoA.</text>
</comment>
<comment type="catalytic activity">
    <reaction evidence="1">
        <text>N(6)-carboxybiotinyl-L-lysyl-[protein] + acetyl-CoA = N(6)-biotinyl-L-lysyl-[protein] + malonyl-CoA</text>
        <dbReference type="Rhea" id="RHEA:54728"/>
        <dbReference type="Rhea" id="RHEA-COMP:10505"/>
        <dbReference type="Rhea" id="RHEA-COMP:10506"/>
        <dbReference type="ChEBI" id="CHEBI:57288"/>
        <dbReference type="ChEBI" id="CHEBI:57384"/>
        <dbReference type="ChEBI" id="CHEBI:83144"/>
        <dbReference type="ChEBI" id="CHEBI:83145"/>
        <dbReference type="EC" id="2.1.3.15"/>
    </reaction>
</comment>
<comment type="pathway">
    <text evidence="1">Lipid metabolism; malonyl-CoA biosynthesis; malonyl-CoA from acetyl-CoA: step 1/1.</text>
</comment>
<comment type="subunit">
    <text evidence="1">Acetyl-CoA carboxylase is a heterohexamer composed of biotin carboxyl carrier protein (AccB), biotin carboxylase (AccC) and two subunits each of ACCase subunit alpha (AccA) and ACCase subunit beta (AccD).</text>
</comment>
<comment type="subcellular location">
    <subcellularLocation>
        <location evidence="1">Cytoplasm</location>
    </subcellularLocation>
</comment>
<comment type="similarity">
    <text evidence="1">Belongs to the AccA family.</text>
</comment>
<keyword id="KW-0067">ATP-binding</keyword>
<keyword id="KW-0963">Cytoplasm</keyword>
<keyword id="KW-0275">Fatty acid biosynthesis</keyword>
<keyword id="KW-0276">Fatty acid metabolism</keyword>
<keyword id="KW-0444">Lipid biosynthesis</keyword>
<keyword id="KW-0443">Lipid metabolism</keyword>
<keyword id="KW-0547">Nucleotide-binding</keyword>
<keyword id="KW-0808">Transferase</keyword>
<accession>B5XHX5</accession>
<name>ACCA_STRPZ</name>
<dbReference type="EC" id="2.1.3.15" evidence="1"/>
<dbReference type="EMBL" id="CP000829">
    <property type="protein sequence ID" value="ACI61637.1"/>
    <property type="molecule type" value="Genomic_DNA"/>
</dbReference>
<dbReference type="SMR" id="B5XHX5"/>
<dbReference type="KEGG" id="soz:Spy49_1359c"/>
<dbReference type="HOGENOM" id="CLU_015486_0_2_9"/>
<dbReference type="UniPathway" id="UPA00655">
    <property type="reaction ID" value="UER00711"/>
</dbReference>
<dbReference type="Proteomes" id="UP000001039">
    <property type="component" value="Chromosome"/>
</dbReference>
<dbReference type="GO" id="GO:0009317">
    <property type="term" value="C:acetyl-CoA carboxylase complex"/>
    <property type="evidence" value="ECO:0007669"/>
    <property type="project" value="InterPro"/>
</dbReference>
<dbReference type="GO" id="GO:0003989">
    <property type="term" value="F:acetyl-CoA carboxylase activity"/>
    <property type="evidence" value="ECO:0007669"/>
    <property type="project" value="InterPro"/>
</dbReference>
<dbReference type="GO" id="GO:0005524">
    <property type="term" value="F:ATP binding"/>
    <property type="evidence" value="ECO:0007669"/>
    <property type="project" value="UniProtKB-KW"/>
</dbReference>
<dbReference type="GO" id="GO:0016743">
    <property type="term" value="F:carboxyl- or carbamoyltransferase activity"/>
    <property type="evidence" value="ECO:0007669"/>
    <property type="project" value="UniProtKB-UniRule"/>
</dbReference>
<dbReference type="GO" id="GO:0006633">
    <property type="term" value="P:fatty acid biosynthetic process"/>
    <property type="evidence" value="ECO:0007669"/>
    <property type="project" value="UniProtKB-KW"/>
</dbReference>
<dbReference type="GO" id="GO:2001295">
    <property type="term" value="P:malonyl-CoA biosynthetic process"/>
    <property type="evidence" value="ECO:0007669"/>
    <property type="project" value="UniProtKB-UniRule"/>
</dbReference>
<dbReference type="Gene3D" id="3.90.226.10">
    <property type="entry name" value="2-enoyl-CoA Hydratase, Chain A, domain 1"/>
    <property type="match status" value="1"/>
</dbReference>
<dbReference type="HAMAP" id="MF_00823">
    <property type="entry name" value="AcetylCoA_CT_alpha"/>
    <property type="match status" value="1"/>
</dbReference>
<dbReference type="InterPro" id="IPR001095">
    <property type="entry name" value="Acetyl_CoA_COase_a_su"/>
</dbReference>
<dbReference type="InterPro" id="IPR029045">
    <property type="entry name" value="ClpP/crotonase-like_dom_sf"/>
</dbReference>
<dbReference type="InterPro" id="IPR011763">
    <property type="entry name" value="COA_CT_C"/>
</dbReference>
<dbReference type="NCBIfam" id="TIGR00513">
    <property type="entry name" value="accA"/>
    <property type="match status" value="1"/>
</dbReference>
<dbReference type="NCBIfam" id="NF041504">
    <property type="entry name" value="AccA_sub"/>
    <property type="match status" value="1"/>
</dbReference>
<dbReference type="NCBIfam" id="NF004344">
    <property type="entry name" value="PRK05724.1"/>
    <property type="match status" value="1"/>
</dbReference>
<dbReference type="NCBIfam" id="NF008971">
    <property type="entry name" value="PRK12319.1"/>
    <property type="match status" value="1"/>
</dbReference>
<dbReference type="PANTHER" id="PTHR42853">
    <property type="entry name" value="ACETYL-COENZYME A CARBOXYLASE CARBOXYL TRANSFERASE SUBUNIT ALPHA"/>
    <property type="match status" value="1"/>
</dbReference>
<dbReference type="PANTHER" id="PTHR42853:SF3">
    <property type="entry name" value="ACETYL-COENZYME A CARBOXYLASE CARBOXYL TRANSFERASE SUBUNIT ALPHA, CHLOROPLASTIC"/>
    <property type="match status" value="1"/>
</dbReference>
<dbReference type="Pfam" id="PF03255">
    <property type="entry name" value="ACCA"/>
    <property type="match status" value="1"/>
</dbReference>
<dbReference type="PRINTS" id="PR01069">
    <property type="entry name" value="ACCCTRFRASEA"/>
</dbReference>
<dbReference type="SUPFAM" id="SSF52096">
    <property type="entry name" value="ClpP/crotonase"/>
    <property type="match status" value="1"/>
</dbReference>
<dbReference type="PROSITE" id="PS50989">
    <property type="entry name" value="COA_CT_CTER"/>
    <property type="match status" value="1"/>
</dbReference>
<reference key="1">
    <citation type="journal article" date="2008" name="J. Bacteriol.">
        <title>Genome sequence of a nephritogenic and highly transformable M49 strain of Streptococcus pyogenes.</title>
        <authorList>
            <person name="McShan W.M."/>
            <person name="Ferretti J.J."/>
            <person name="Karasawa T."/>
            <person name="Suvorov A.N."/>
            <person name="Lin S."/>
            <person name="Qin B."/>
            <person name="Jia H."/>
            <person name="Kenton S."/>
            <person name="Najar F."/>
            <person name="Wu H."/>
            <person name="Scott J."/>
            <person name="Roe B.A."/>
            <person name="Savic D.J."/>
        </authorList>
    </citation>
    <scope>NUCLEOTIDE SEQUENCE [LARGE SCALE GENOMIC DNA]</scope>
    <source>
        <strain>NZ131</strain>
    </source>
</reference>
<protein>
    <recommendedName>
        <fullName evidence="1">Acetyl-coenzyme A carboxylase carboxyl transferase subunit alpha</fullName>
        <shortName evidence="1">ACCase subunit alpha</shortName>
        <shortName evidence="1">Acetyl-CoA carboxylase carboxyltransferase subunit alpha</shortName>
        <ecNumber evidence="1">2.1.3.15</ecNumber>
    </recommendedName>
</protein>
<sequence length="256" mass="28167">MTDVSRVLKEARDQGRLTTLDYANLIFDDFMELHGDRHFSDDGAIVGGLAYLAGQPVTVIGIQKGKNLQDNLARNFGQPNPEGYRKALRLMKQAEKFGRPVVTFINTAGAYPGVGAEERGQGEAIAKNLMEMSDLKVPIIAIIIGEGGSGGALALAVADQVWMLENTMYAVLSPEGFASILWKDGSRATEAAELMKITAGELYQMGIVDRIIPEHGYFSSEIVDIIKANLIEQITSLQAKPLDQLLDERYQRFRKY</sequence>
<organism>
    <name type="scientific">Streptococcus pyogenes serotype M49 (strain NZ131)</name>
    <dbReference type="NCBI Taxonomy" id="471876"/>
    <lineage>
        <taxon>Bacteria</taxon>
        <taxon>Bacillati</taxon>
        <taxon>Bacillota</taxon>
        <taxon>Bacilli</taxon>
        <taxon>Lactobacillales</taxon>
        <taxon>Streptococcaceae</taxon>
        <taxon>Streptococcus</taxon>
    </lineage>
</organism>
<gene>
    <name evidence="1" type="primary">accA</name>
    <name type="ordered locus">Spy49_1359c</name>
</gene>
<evidence type="ECO:0000255" key="1">
    <source>
        <dbReference type="HAMAP-Rule" id="MF_00823"/>
    </source>
</evidence>
<evidence type="ECO:0000255" key="2">
    <source>
        <dbReference type="PROSITE-ProRule" id="PRU01137"/>
    </source>
</evidence>
<feature type="chain" id="PRO_1000134530" description="Acetyl-coenzyme A carboxylase carboxyl transferase subunit alpha">
    <location>
        <begin position="1"/>
        <end position="256"/>
    </location>
</feature>
<feature type="domain" description="CoA carboxyltransferase C-terminal" evidence="2">
    <location>
        <begin position="1"/>
        <end position="236"/>
    </location>
</feature>